<sequence length="828" mass="92718">MQDRNLIDVNLTSEMKTSFIDYAMSVIVARALPDVRDGLKPVHRRILYGMNELGVTPDKPHKKSARITGDVMGKYHPHGDSSIYEAMVRMAQWWSYRHMLVDGHGNFGSMDGDGAAAQRYTEARMSKIALELLRDINKNTVNFQDNYDGSEREPVVLPARFPNLLVNGATGIAVGMATNIPPHNLAESIDAVKMVMEHPDCTTRELMEVIPGPDFPTGALVMGRSGIHRAYDTGKGSIVLRSRTEIETTQTGRERIVVTEFPYGVNKTKVHEHIVRLAQEKRLEGITAVRDESSREGVRFVIEIRREASATVILNNLFKLTSLQTNFSFNMLAIENGVPKILSLRQIIDNYISHQKEVIIRRTRFDKDKAEARAHILEGLLIALDHLDEVIAIIRNSETDVIAQTELMSRFDLSERQSQAILDMRLRRLTGLERDKIQSEYDDLLALIADLSDILAKPERIITIIKEEMDEIKRKYANPRRTELMVGEVLSLEDEDLIEEEDVLITLSNKGYIKRLAQDEFRAQKRGGRGVQGTGVNNDDFVRELVSTSTHDTLLFFTNFGRVYRLKAYEIPEYGRTAKGLPIVNLLKLEDGETIQTIINARKEETAGKSFFFTTKQGIVKRTEVSEFNNIRQNGLRALKLKEGDQLINVLLTSGQDDIIIGTHSGYSVRFNEASIRNMGRSATGVRGVKLREDDRVVGASRIRDNQEVLVITENGFGKRTSATDYPTKGRGGKGIKTANITPKNGQLAGLVTVDGTEDIMVITNKGVIIRTNVANISQTGRATLGVKIMKLDADAKIVTFTLVQPEDSSIAEINTDRENSISKNKDN</sequence>
<organism>
    <name type="scientific">Streptococcus pyogenes serotype M6 (strain ATCC BAA-946 / MGAS10394)</name>
    <dbReference type="NCBI Taxonomy" id="286636"/>
    <lineage>
        <taxon>Bacteria</taxon>
        <taxon>Bacillati</taxon>
        <taxon>Bacillota</taxon>
        <taxon>Bacilli</taxon>
        <taxon>Lactobacillales</taxon>
        <taxon>Streptococcaceae</taxon>
        <taxon>Streptococcus</taxon>
    </lineage>
</organism>
<protein>
    <recommendedName>
        <fullName evidence="1">DNA gyrase subunit A</fullName>
        <ecNumber evidence="1">5.6.2.2</ecNumber>
    </recommendedName>
</protein>
<gene>
    <name evidence="1" type="primary">gyrA</name>
    <name type="ordered locus">M6_Spy0870</name>
</gene>
<comment type="function">
    <text evidence="1">A type II topoisomerase that negatively supercoils closed circular double-stranded (ds) DNA in an ATP-dependent manner to modulate DNA topology and maintain chromosomes in an underwound state. Negative supercoiling favors strand separation, and DNA replication, transcription, recombination and repair, all of which involve strand separation. Also able to catalyze the interconversion of other topological isomers of dsDNA rings, including catenanes and knotted rings. Type II topoisomerases break and join 2 DNA strands simultaneously in an ATP-dependent manner.</text>
</comment>
<comment type="catalytic activity">
    <reaction evidence="1">
        <text>ATP-dependent breakage, passage and rejoining of double-stranded DNA.</text>
        <dbReference type="EC" id="5.6.2.2"/>
    </reaction>
</comment>
<comment type="subunit">
    <text evidence="1">Heterotetramer, composed of two GyrA and two GyrB chains. In the heterotetramer, GyrA contains the active site tyrosine that forms a transient covalent intermediate with DNA, while GyrB binds cofactors and catalyzes ATP hydrolysis.</text>
</comment>
<comment type="subcellular location">
    <subcellularLocation>
        <location evidence="1">Cytoplasm</location>
    </subcellularLocation>
</comment>
<comment type="miscellaneous">
    <text evidence="1">Few gyrases are as efficient as E.coli at forming negative supercoils. Not all organisms have 2 type II topoisomerases; in organisms with a single type II topoisomerase this enzyme also has to decatenate newly replicated chromosomes.</text>
</comment>
<comment type="similarity">
    <text evidence="1">Belongs to the type II topoisomerase GyrA/ParC subunit family.</text>
</comment>
<keyword id="KW-0067">ATP-binding</keyword>
<keyword id="KW-0963">Cytoplasm</keyword>
<keyword id="KW-0238">DNA-binding</keyword>
<keyword id="KW-0413">Isomerase</keyword>
<keyword id="KW-0547">Nucleotide-binding</keyword>
<keyword id="KW-0799">Topoisomerase</keyword>
<proteinExistence type="inferred from homology"/>
<name>GYRA_STRP6</name>
<dbReference type="EC" id="5.6.2.2" evidence="1"/>
<dbReference type="EMBL" id="CP000003">
    <property type="protein sequence ID" value="AAT87005.1"/>
    <property type="molecule type" value="Genomic_DNA"/>
</dbReference>
<dbReference type="RefSeq" id="WP_002984643.1">
    <property type="nucleotide sequence ID" value="NC_006086.1"/>
</dbReference>
<dbReference type="SMR" id="Q5XC58"/>
<dbReference type="KEGG" id="spa:M6_Spy0870"/>
<dbReference type="HOGENOM" id="CLU_002977_6_1_9"/>
<dbReference type="Proteomes" id="UP000001167">
    <property type="component" value="Chromosome"/>
</dbReference>
<dbReference type="GO" id="GO:0005694">
    <property type="term" value="C:chromosome"/>
    <property type="evidence" value="ECO:0007669"/>
    <property type="project" value="InterPro"/>
</dbReference>
<dbReference type="GO" id="GO:0005737">
    <property type="term" value="C:cytoplasm"/>
    <property type="evidence" value="ECO:0007669"/>
    <property type="project" value="UniProtKB-SubCell"/>
</dbReference>
<dbReference type="GO" id="GO:0009330">
    <property type="term" value="C:DNA topoisomerase type II (double strand cut, ATP-hydrolyzing) complex"/>
    <property type="evidence" value="ECO:0007669"/>
    <property type="project" value="TreeGrafter"/>
</dbReference>
<dbReference type="GO" id="GO:0005524">
    <property type="term" value="F:ATP binding"/>
    <property type="evidence" value="ECO:0007669"/>
    <property type="project" value="UniProtKB-UniRule"/>
</dbReference>
<dbReference type="GO" id="GO:0003677">
    <property type="term" value="F:DNA binding"/>
    <property type="evidence" value="ECO:0007669"/>
    <property type="project" value="UniProtKB-UniRule"/>
</dbReference>
<dbReference type="GO" id="GO:0034335">
    <property type="term" value="F:DNA negative supercoiling activity"/>
    <property type="evidence" value="ECO:0007669"/>
    <property type="project" value="UniProtKB-ARBA"/>
</dbReference>
<dbReference type="GO" id="GO:0006265">
    <property type="term" value="P:DNA topological change"/>
    <property type="evidence" value="ECO:0007669"/>
    <property type="project" value="UniProtKB-UniRule"/>
</dbReference>
<dbReference type="GO" id="GO:0006261">
    <property type="term" value="P:DNA-templated DNA replication"/>
    <property type="evidence" value="ECO:0007669"/>
    <property type="project" value="UniProtKB-UniRule"/>
</dbReference>
<dbReference type="CDD" id="cd00187">
    <property type="entry name" value="TOP4c"/>
    <property type="match status" value="1"/>
</dbReference>
<dbReference type="FunFam" id="1.10.268.10:FF:000001">
    <property type="entry name" value="DNA gyrase subunit A"/>
    <property type="match status" value="1"/>
</dbReference>
<dbReference type="FunFam" id="2.120.10.90:FF:000004">
    <property type="entry name" value="DNA gyrase subunit A"/>
    <property type="match status" value="1"/>
</dbReference>
<dbReference type="FunFam" id="3.30.1360.40:FF:000002">
    <property type="entry name" value="DNA gyrase subunit A"/>
    <property type="match status" value="1"/>
</dbReference>
<dbReference type="FunFam" id="3.90.199.10:FF:000001">
    <property type="entry name" value="DNA gyrase subunit A"/>
    <property type="match status" value="1"/>
</dbReference>
<dbReference type="Gene3D" id="3.30.1360.40">
    <property type="match status" value="1"/>
</dbReference>
<dbReference type="Gene3D" id="2.120.10.90">
    <property type="entry name" value="DNA gyrase/topoisomerase IV, subunit A, C-terminal"/>
    <property type="match status" value="1"/>
</dbReference>
<dbReference type="Gene3D" id="3.90.199.10">
    <property type="entry name" value="Topoisomerase II, domain 5"/>
    <property type="match status" value="1"/>
</dbReference>
<dbReference type="Gene3D" id="1.10.268.10">
    <property type="entry name" value="Topoisomerase, domain 3"/>
    <property type="match status" value="1"/>
</dbReference>
<dbReference type="HAMAP" id="MF_01897">
    <property type="entry name" value="GyrA"/>
    <property type="match status" value="1"/>
</dbReference>
<dbReference type="InterPro" id="IPR005743">
    <property type="entry name" value="GyrA"/>
</dbReference>
<dbReference type="InterPro" id="IPR006691">
    <property type="entry name" value="GyrA/parC_rep"/>
</dbReference>
<dbReference type="InterPro" id="IPR035516">
    <property type="entry name" value="Gyrase/topoIV_suA_C"/>
</dbReference>
<dbReference type="InterPro" id="IPR013760">
    <property type="entry name" value="Topo_IIA-like_dom_sf"/>
</dbReference>
<dbReference type="InterPro" id="IPR013758">
    <property type="entry name" value="Topo_IIA_A/C_ab"/>
</dbReference>
<dbReference type="InterPro" id="IPR013757">
    <property type="entry name" value="Topo_IIA_A_a_sf"/>
</dbReference>
<dbReference type="InterPro" id="IPR002205">
    <property type="entry name" value="Topo_IIA_dom_A"/>
</dbReference>
<dbReference type="InterPro" id="IPR050220">
    <property type="entry name" value="Type_II_DNA_Topoisomerases"/>
</dbReference>
<dbReference type="NCBIfam" id="TIGR01063">
    <property type="entry name" value="gyrA"/>
    <property type="match status" value="1"/>
</dbReference>
<dbReference type="NCBIfam" id="NF004043">
    <property type="entry name" value="PRK05560.1"/>
    <property type="match status" value="1"/>
</dbReference>
<dbReference type="NCBIfam" id="NF004044">
    <property type="entry name" value="PRK05561.1"/>
    <property type="match status" value="1"/>
</dbReference>
<dbReference type="PANTHER" id="PTHR43493:SF5">
    <property type="entry name" value="DNA GYRASE SUBUNIT A, CHLOROPLASTIC_MITOCHONDRIAL"/>
    <property type="match status" value="1"/>
</dbReference>
<dbReference type="PANTHER" id="PTHR43493">
    <property type="entry name" value="DNA GYRASE/TOPOISOMERASE SUBUNIT A"/>
    <property type="match status" value="1"/>
</dbReference>
<dbReference type="Pfam" id="PF03989">
    <property type="entry name" value="DNA_gyraseA_C"/>
    <property type="match status" value="6"/>
</dbReference>
<dbReference type="Pfam" id="PF00521">
    <property type="entry name" value="DNA_topoisoIV"/>
    <property type="match status" value="1"/>
</dbReference>
<dbReference type="SMART" id="SM00434">
    <property type="entry name" value="TOP4c"/>
    <property type="match status" value="1"/>
</dbReference>
<dbReference type="SUPFAM" id="SSF101904">
    <property type="entry name" value="GyrA/ParC C-terminal domain-like"/>
    <property type="match status" value="1"/>
</dbReference>
<dbReference type="SUPFAM" id="SSF56719">
    <property type="entry name" value="Type II DNA topoisomerase"/>
    <property type="match status" value="1"/>
</dbReference>
<dbReference type="PROSITE" id="PS52040">
    <property type="entry name" value="TOPO_IIA"/>
    <property type="match status" value="1"/>
</dbReference>
<evidence type="ECO:0000255" key="1">
    <source>
        <dbReference type="HAMAP-Rule" id="MF_01897"/>
    </source>
</evidence>
<evidence type="ECO:0000255" key="2">
    <source>
        <dbReference type="PROSITE-ProRule" id="PRU01384"/>
    </source>
</evidence>
<reference key="1">
    <citation type="journal article" date="2004" name="J. Infect. Dis.">
        <title>Progress toward characterization of the group A Streptococcus metagenome: complete genome sequence of a macrolide-resistant serotype M6 strain.</title>
        <authorList>
            <person name="Banks D.J."/>
            <person name="Porcella S.F."/>
            <person name="Barbian K.D."/>
            <person name="Beres S.B."/>
            <person name="Philips L.E."/>
            <person name="Voyich J.M."/>
            <person name="DeLeo F.R."/>
            <person name="Martin J.M."/>
            <person name="Somerville G.A."/>
            <person name="Musser J.M."/>
        </authorList>
    </citation>
    <scope>NUCLEOTIDE SEQUENCE [LARGE SCALE GENOMIC DNA]</scope>
    <source>
        <strain>ATCC BAA-946 / MGAS10394</strain>
    </source>
</reference>
<feature type="chain" id="PRO_0000145266" description="DNA gyrase subunit A">
    <location>
        <begin position="1"/>
        <end position="828"/>
    </location>
</feature>
<feature type="domain" description="Topo IIA-type catalytic" evidence="2">
    <location>
        <begin position="32"/>
        <end position="497"/>
    </location>
</feature>
<feature type="short sequence motif" description="GyrA-box" evidence="1">
    <location>
        <begin position="524"/>
        <end position="530"/>
    </location>
</feature>
<feature type="active site" description="O-(5'-phospho-DNA)-tyrosine intermediate" evidence="1">
    <location>
        <position position="120"/>
    </location>
</feature>
<accession>Q5XC58</accession>